<name>AQP71_LACBI</name>
<organism>
    <name type="scientific">Laccaria bicolor</name>
    <name type="common">Bicoloured deceiver</name>
    <name type="synonym">Laccaria laccata var. bicolor</name>
    <dbReference type="NCBI Taxonomy" id="29883"/>
    <lineage>
        <taxon>Eukaryota</taxon>
        <taxon>Fungi</taxon>
        <taxon>Dikarya</taxon>
        <taxon>Basidiomycota</taxon>
        <taxon>Agaricomycotina</taxon>
        <taxon>Agaricomycetes</taxon>
        <taxon>Agaricomycetidae</taxon>
        <taxon>Agaricales</taxon>
        <taxon>Agaricineae</taxon>
        <taxon>Hydnangiaceae</taxon>
        <taxon>Laccaria</taxon>
    </lineage>
</organism>
<proteinExistence type="evidence at transcript level"/>
<feature type="chain" id="PRO_0000457451" description="Aquaporin-7-1">
    <location>
        <begin position="1"/>
        <end position="332"/>
    </location>
</feature>
<feature type="topological domain" description="Cytoplasmic" evidence="8">
    <location>
        <begin position="1"/>
        <end position="66"/>
    </location>
</feature>
<feature type="transmembrane region" description="Helical" evidence="2">
    <location>
        <begin position="67"/>
        <end position="87"/>
    </location>
</feature>
<feature type="topological domain" description="Extracellular" evidence="8">
    <location>
        <begin position="88"/>
        <end position="100"/>
    </location>
</feature>
<feature type="transmembrane region" description="Helical" evidence="2">
    <location>
        <begin position="101"/>
        <end position="121"/>
    </location>
</feature>
<feature type="topological domain" description="Cytoplasmic" evidence="8">
    <location>
        <begin position="122"/>
        <end position="144"/>
    </location>
</feature>
<feature type="transmembrane region" description="Helical" evidence="2">
    <location>
        <begin position="145"/>
        <end position="165"/>
    </location>
</feature>
<feature type="topological domain" description="Extracellular" evidence="8">
    <location>
        <begin position="166"/>
        <end position="199"/>
    </location>
</feature>
<feature type="transmembrane region" description="Helical" evidence="2">
    <location>
        <begin position="200"/>
        <end position="220"/>
    </location>
</feature>
<feature type="topological domain" description="Cytoplasmic" evidence="8">
    <location>
        <begin position="221"/>
        <end position="230"/>
    </location>
</feature>
<feature type="transmembrane region" description="Helical" evidence="2">
    <location>
        <begin position="231"/>
        <end position="251"/>
    </location>
</feature>
<feature type="topological domain" description="Extracellular" evidence="8">
    <location>
        <begin position="252"/>
        <end position="283"/>
    </location>
</feature>
<feature type="transmembrane region" description="Helical" evidence="2">
    <location>
        <begin position="284"/>
        <end position="304"/>
    </location>
</feature>
<feature type="topological domain" description="Cytoplasmic" evidence="8">
    <location>
        <begin position="305"/>
        <end position="332"/>
    </location>
</feature>
<feature type="short sequence motif" description="NPA 1" evidence="1">
    <location>
        <begin position="127"/>
        <end position="129"/>
    </location>
</feature>
<feature type="short sequence motif" description="NPA 2" evidence="1">
    <location>
        <begin position="257"/>
        <end position="259"/>
    </location>
</feature>
<evidence type="ECO:0000250" key="1">
    <source>
        <dbReference type="UniProtKB" id="B0D4J9"/>
    </source>
</evidence>
<evidence type="ECO:0000255" key="2"/>
<evidence type="ECO:0000269" key="3">
    <source>
    </source>
</evidence>
<evidence type="ECO:0000269" key="4">
    <source>
    </source>
</evidence>
<evidence type="ECO:0000269" key="5">
    <source>
    </source>
</evidence>
<evidence type="ECO:0000269" key="6">
    <source>
    </source>
</evidence>
<evidence type="ECO:0000303" key="7">
    <source>
    </source>
</evidence>
<evidence type="ECO:0000305" key="8"/>
<protein>
    <recommendedName>
        <fullName evidence="7">Aquaporin-7-1</fullName>
    </recommendedName>
</protein>
<keyword id="KW-0472">Membrane</keyword>
<keyword id="KW-0677">Repeat</keyword>
<keyword id="KW-0812">Transmembrane</keyword>
<keyword id="KW-1133">Transmembrane helix</keyword>
<keyword id="KW-0813">Transport</keyword>
<gene>
    <name evidence="7" type="primary">AQP7-1</name>
</gene>
<dbReference type="EMBL" id="JQ585596">
    <property type="protein sequence ID" value="AFJ15559.1"/>
    <property type="molecule type" value="mRNA"/>
</dbReference>
<dbReference type="SMR" id="I1Z8E9"/>
<dbReference type="GO" id="GO:0005886">
    <property type="term" value="C:plasma membrane"/>
    <property type="evidence" value="ECO:0007669"/>
    <property type="project" value="TreeGrafter"/>
</dbReference>
<dbReference type="GO" id="GO:0015254">
    <property type="term" value="F:glycerol channel activity"/>
    <property type="evidence" value="ECO:0007669"/>
    <property type="project" value="TreeGrafter"/>
</dbReference>
<dbReference type="GO" id="GO:0015250">
    <property type="term" value="F:water channel activity"/>
    <property type="evidence" value="ECO:0007669"/>
    <property type="project" value="TreeGrafter"/>
</dbReference>
<dbReference type="CDD" id="cd00333">
    <property type="entry name" value="MIP"/>
    <property type="match status" value="1"/>
</dbReference>
<dbReference type="FunFam" id="1.20.1080.10:FF:000027">
    <property type="entry name" value="MIP aquaporin"/>
    <property type="match status" value="1"/>
</dbReference>
<dbReference type="Gene3D" id="1.20.1080.10">
    <property type="entry name" value="Glycerol uptake facilitator protein"/>
    <property type="match status" value="1"/>
</dbReference>
<dbReference type="InterPro" id="IPR023271">
    <property type="entry name" value="Aquaporin-like"/>
</dbReference>
<dbReference type="InterPro" id="IPR000425">
    <property type="entry name" value="MIP"/>
</dbReference>
<dbReference type="InterPro" id="IPR050363">
    <property type="entry name" value="MIP/Aquaporin"/>
</dbReference>
<dbReference type="InterPro" id="IPR022357">
    <property type="entry name" value="MIP_CS"/>
</dbReference>
<dbReference type="NCBIfam" id="TIGR00861">
    <property type="entry name" value="MIP"/>
    <property type="match status" value="1"/>
</dbReference>
<dbReference type="PANTHER" id="PTHR43829">
    <property type="entry name" value="AQUAPORIN OR AQUAGLYCEROPORIN RELATED"/>
    <property type="match status" value="1"/>
</dbReference>
<dbReference type="PANTHER" id="PTHR43829:SF9">
    <property type="entry name" value="AQUAPORIN-9"/>
    <property type="match status" value="1"/>
</dbReference>
<dbReference type="Pfam" id="PF00230">
    <property type="entry name" value="MIP"/>
    <property type="match status" value="1"/>
</dbReference>
<dbReference type="PRINTS" id="PR02019">
    <property type="entry name" value="AQUAPORIN7"/>
</dbReference>
<dbReference type="PRINTS" id="PR00783">
    <property type="entry name" value="MINTRINSICP"/>
</dbReference>
<dbReference type="SUPFAM" id="SSF81338">
    <property type="entry name" value="Aquaporin-like"/>
    <property type="match status" value="1"/>
</dbReference>
<dbReference type="PROSITE" id="PS00221">
    <property type="entry name" value="MIP"/>
    <property type="match status" value="1"/>
</dbReference>
<accession>I1Z8E9</accession>
<comment type="function">
    <text evidence="3 4">Water channel required to facilitate the transport of water across membranes (PubMed:25323307). Does not mediate the transport carbon dioxide across the membrane (PubMed:25857333).</text>
</comment>
<comment type="catalytic activity">
    <reaction evidence="3">
        <text>H2O(in) = H2O(out)</text>
        <dbReference type="Rhea" id="RHEA:29667"/>
        <dbReference type="ChEBI" id="CHEBI:15377"/>
    </reaction>
</comment>
<comment type="subcellular location">
    <subcellularLocation>
        <location evidence="2">Membrane</location>
        <topology evidence="2">Multi-pass membrane protein</topology>
    </subcellularLocation>
</comment>
<comment type="induction">
    <text evidence="5 6">Expression is up-regulated during development of the basidiocarp (PubMed:25957233). Expression is positively correlated with root abscisic acid (ABA) content during ectomycorrhizal interaction with poplar trees (PubMed:31504720).</text>
</comment>
<comment type="domain">
    <text evidence="1">Aquaporins contain two tandem repeats each containing three membrane-spanning domains and a pore-forming loop with the signature motif Asn-Pro-Ala (NPA).</text>
</comment>
<comment type="similarity">
    <text evidence="8">Belongs to the MIP/aquaporin (TC 1.A.8) family.</text>
</comment>
<sequence>MSGQHQITEQPSGNPLSRTSTLIQEKPLTPTSSHAETQKHLEAPRQSSFLIQLQDIRHAIRMPMAEFFGVALLIIFGAGSACQVVLSTNPNVASSDRGSFLSINLGWAIGIAMGAWVSGGISGGHINPAITIAMATYRGFPWRRVPSYIFAQVLGGVVGAALVYANYIHAIDIFEGGRHVRTQATASLFATYALPYMTQVSCFFSEFLATAVLSMMVLALTDNRNGAPTNGLLPFALFVLFIGLGASLGMETAYALNPARDFGPRLFLAMSGYGKALFNYRSQYWLWAPIIAPVLGAQAGGLLYDTFLYDGDNSPIKWRRASSQECQLAEVV</sequence>
<reference key="1">
    <citation type="journal article" date="2015" name="New Phytol.">
        <title>Overexpression of Laccaria bicolor aquaporin JQ585595 alters root water transport properties in ectomycorrhizal white spruce (Picea glauca) seedlings.</title>
        <authorList>
            <person name="Xu H."/>
            <person name="Kemppainen M."/>
            <person name="El Kayal W."/>
            <person name="Lee S.H."/>
            <person name="Pardo A.G."/>
            <person name="Cooke J.E."/>
            <person name="Zwiazek J.J."/>
        </authorList>
    </citation>
    <scope>NUCLEOTIDE SEQUENCE [MRNA]</scope>
    <scope>FUNCTION</scope>
    <scope>TRANSPORTER ACTIVITY</scope>
    <source>
        <strain>UAMH8232</strain>
    </source>
</reference>
<reference key="2">
    <citation type="journal article" date="2015" name="Plant Cell Environ.">
        <title>Laccaria bicolor aquaporin LbAQP1 is required for Hartig net development in trembling aspen (Populus tremuloides).</title>
        <authorList>
            <person name="Navarro-RoDenas A."/>
            <person name="Xu H."/>
            <person name="Kemppainen M."/>
            <person name="Pardo A.G."/>
            <person name="Zwiazek J.J."/>
        </authorList>
    </citation>
    <scope>FUNCTION</scope>
</reference>
<reference key="3">
    <citation type="journal article" date="2016" name="Mycorrhiza">
        <title>Transcript profiling of aquaporins during basidiocarp development in Laccaria bicolor ectomycorrhizal with Picea glauca.</title>
        <authorList>
            <person name="Xu H."/>
            <person name="Navarro-Rodenas A."/>
            <person name="Cooke J.E."/>
            <person name="Zwiazek J.J."/>
        </authorList>
    </citation>
    <scope>INDUCTION</scope>
</reference>
<reference key="4">
    <citation type="journal article" date="2019" name="J. Exp. Bot.">
        <title>Local root ABA/cytokinin status and aquaporins regulate poplar responses to mild drought stress independently of the ectomycorrhizal fungus Laccaria bicolor.</title>
        <authorList>
            <person name="Calvo-Polanco M."/>
            <person name="Armada E."/>
            <person name="Zamarreno A.M."/>
            <person name="Garcia-Mina J.M."/>
            <person name="Aroca R."/>
        </authorList>
    </citation>
    <scope>INDUCTION</scope>
</reference>